<reference key="1">
    <citation type="journal article" date="1994" name="Microbiology">
        <title>Sequence and analysis of the citrulline biosynthetic operon argC-F from Bacillus subtilis.</title>
        <authorList>
            <person name="O'Reilly M."/>
            <person name="Devine K.M."/>
        </authorList>
    </citation>
    <scope>NUCLEOTIDE SEQUENCE [GENOMIC DNA]</scope>
    <source>
        <strain>168</strain>
    </source>
</reference>
<reference key="2">
    <citation type="journal article" date="1997" name="Nature">
        <title>The complete genome sequence of the Gram-positive bacterium Bacillus subtilis.</title>
        <authorList>
            <person name="Kunst F."/>
            <person name="Ogasawara N."/>
            <person name="Moszer I."/>
            <person name="Albertini A.M."/>
            <person name="Alloni G."/>
            <person name="Azevedo V."/>
            <person name="Bertero M.G."/>
            <person name="Bessieres P."/>
            <person name="Bolotin A."/>
            <person name="Borchert S."/>
            <person name="Borriss R."/>
            <person name="Boursier L."/>
            <person name="Brans A."/>
            <person name="Braun M."/>
            <person name="Brignell S.C."/>
            <person name="Bron S."/>
            <person name="Brouillet S."/>
            <person name="Bruschi C.V."/>
            <person name="Caldwell B."/>
            <person name="Capuano V."/>
            <person name="Carter N.M."/>
            <person name="Choi S.-K."/>
            <person name="Codani J.-J."/>
            <person name="Connerton I.F."/>
            <person name="Cummings N.J."/>
            <person name="Daniel R.A."/>
            <person name="Denizot F."/>
            <person name="Devine K.M."/>
            <person name="Duesterhoeft A."/>
            <person name="Ehrlich S.D."/>
            <person name="Emmerson P.T."/>
            <person name="Entian K.-D."/>
            <person name="Errington J."/>
            <person name="Fabret C."/>
            <person name="Ferrari E."/>
            <person name="Foulger D."/>
            <person name="Fritz C."/>
            <person name="Fujita M."/>
            <person name="Fujita Y."/>
            <person name="Fuma S."/>
            <person name="Galizzi A."/>
            <person name="Galleron N."/>
            <person name="Ghim S.-Y."/>
            <person name="Glaser P."/>
            <person name="Goffeau A."/>
            <person name="Golightly E.J."/>
            <person name="Grandi G."/>
            <person name="Guiseppi G."/>
            <person name="Guy B.J."/>
            <person name="Haga K."/>
            <person name="Haiech J."/>
            <person name="Harwood C.R."/>
            <person name="Henaut A."/>
            <person name="Hilbert H."/>
            <person name="Holsappel S."/>
            <person name="Hosono S."/>
            <person name="Hullo M.-F."/>
            <person name="Itaya M."/>
            <person name="Jones L.-M."/>
            <person name="Joris B."/>
            <person name="Karamata D."/>
            <person name="Kasahara Y."/>
            <person name="Klaerr-Blanchard M."/>
            <person name="Klein C."/>
            <person name="Kobayashi Y."/>
            <person name="Koetter P."/>
            <person name="Koningstein G."/>
            <person name="Krogh S."/>
            <person name="Kumano M."/>
            <person name="Kurita K."/>
            <person name="Lapidus A."/>
            <person name="Lardinois S."/>
            <person name="Lauber J."/>
            <person name="Lazarevic V."/>
            <person name="Lee S.-M."/>
            <person name="Levine A."/>
            <person name="Liu H."/>
            <person name="Masuda S."/>
            <person name="Mauel C."/>
            <person name="Medigue C."/>
            <person name="Medina N."/>
            <person name="Mellado R.P."/>
            <person name="Mizuno M."/>
            <person name="Moestl D."/>
            <person name="Nakai S."/>
            <person name="Noback M."/>
            <person name="Noone D."/>
            <person name="O'Reilly M."/>
            <person name="Ogawa K."/>
            <person name="Ogiwara A."/>
            <person name="Oudega B."/>
            <person name="Park S.-H."/>
            <person name="Parro V."/>
            <person name="Pohl T.M."/>
            <person name="Portetelle D."/>
            <person name="Porwollik S."/>
            <person name="Prescott A.M."/>
            <person name="Presecan E."/>
            <person name="Pujic P."/>
            <person name="Purnelle B."/>
            <person name="Rapoport G."/>
            <person name="Rey M."/>
            <person name="Reynolds S."/>
            <person name="Rieger M."/>
            <person name="Rivolta C."/>
            <person name="Rocha E."/>
            <person name="Roche B."/>
            <person name="Rose M."/>
            <person name="Sadaie Y."/>
            <person name="Sato T."/>
            <person name="Scanlan E."/>
            <person name="Schleich S."/>
            <person name="Schroeter R."/>
            <person name="Scoffone F."/>
            <person name="Sekiguchi J."/>
            <person name="Sekowska A."/>
            <person name="Seror S.J."/>
            <person name="Serror P."/>
            <person name="Shin B.-S."/>
            <person name="Soldo B."/>
            <person name="Sorokin A."/>
            <person name="Tacconi E."/>
            <person name="Takagi T."/>
            <person name="Takahashi H."/>
            <person name="Takemaru K."/>
            <person name="Takeuchi M."/>
            <person name="Tamakoshi A."/>
            <person name="Tanaka T."/>
            <person name="Terpstra P."/>
            <person name="Tognoni A."/>
            <person name="Tosato V."/>
            <person name="Uchiyama S."/>
            <person name="Vandenbol M."/>
            <person name="Vannier F."/>
            <person name="Vassarotti A."/>
            <person name="Viari A."/>
            <person name="Wambutt R."/>
            <person name="Wedler E."/>
            <person name="Wedler H."/>
            <person name="Weitzenegger T."/>
            <person name="Winters P."/>
            <person name="Wipat A."/>
            <person name="Yamamoto H."/>
            <person name="Yamane K."/>
            <person name="Yasumoto K."/>
            <person name="Yata K."/>
            <person name="Yoshida K."/>
            <person name="Yoshikawa H.-F."/>
            <person name="Zumstein E."/>
            <person name="Yoshikawa H."/>
            <person name="Danchin A."/>
        </authorList>
    </citation>
    <scope>NUCLEOTIDE SEQUENCE [LARGE SCALE GENOMIC DNA]</scope>
    <source>
        <strain>168</strain>
    </source>
</reference>
<keyword id="KW-0028">Amino-acid biosynthesis</keyword>
<keyword id="KW-0055">Arginine biosynthesis</keyword>
<keyword id="KW-0067">ATP-binding</keyword>
<keyword id="KW-0963">Cytoplasm</keyword>
<keyword id="KW-0418">Kinase</keyword>
<keyword id="KW-0547">Nucleotide-binding</keyword>
<keyword id="KW-1185">Reference proteome</keyword>
<keyword id="KW-0808">Transferase</keyword>
<gene>
    <name evidence="1" type="primary">argB</name>
    <name type="ordered locus">BSU11210</name>
</gene>
<comment type="function">
    <text evidence="1">Catalyzes the ATP-dependent phosphorylation of N-acetyl-L-glutamate.</text>
</comment>
<comment type="catalytic activity">
    <reaction evidence="1">
        <text>N-acetyl-L-glutamate + ATP = N-acetyl-L-glutamyl 5-phosphate + ADP</text>
        <dbReference type="Rhea" id="RHEA:14629"/>
        <dbReference type="ChEBI" id="CHEBI:30616"/>
        <dbReference type="ChEBI" id="CHEBI:44337"/>
        <dbReference type="ChEBI" id="CHEBI:57936"/>
        <dbReference type="ChEBI" id="CHEBI:456216"/>
        <dbReference type="EC" id="2.7.2.8"/>
    </reaction>
</comment>
<comment type="pathway">
    <text evidence="1">Amino-acid biosynthesis; L-arginine biosynthesis; N(2)-acetyl-L-ornithine from L-glutamate: step 2/4.</text>
</comment>
<comment type="subcellular location">
    <subcellularLocation>
        <location evidence="1">Cytoplasm</location>
    </subcellularLocation>
</comment>
<comment type="similarity">
    <text evidence="1">Belongs to the acetylglutamate kinase family. ArgB subfamily.</text>
</comment>
<name>ARGB_BACSU</name>
<evidence type="ECO:0000255" key="1">
    <source>
        <dbReference type="HAMAP-Rule" id="MF_00082"/>
    </source>
</evidence>
<dbReference type="EC" id="2.7.2.8" evidence="1"/>
<dbReference type="EMBL" id="Z26919">
    <property type="protein sequence ID" value="CAA81545.1"/>
    <property type="molecule type" value="Genomic_DNA"/>
</dbReference>
<dbReference type="EMBL" id="AL009126">
    <property type="protein sequence ID" value="CAB12962.1"/>
    <property type="molecule type" value="Genomic_DNA"/>
</dbReference>
<dbReference type="PIR" id="I40374">
    <property type="entry name" value="I40374"/>
</dbReference>
<dbReference type="RefSeq" id="NP_389003.1">
    <property type="nucleotide sequence ID" value="NC_000964.3"/>
</dbReference>
<dbReference type="RefSeq" id="WP_003232987.1">
    <property type="nucleotide sequence ID" value="NZ_OZ025638.1"/>
</dbReference>
<dbReference type="SMR" id="P68729"/>
<dbReference type="FunCoup" id="P68729">
    <property type="interactions" value="581"/>
</dbReference>
<dbReference type="STRING" id="224308.BSU11210"/>
<dbReference type="PaxDb" id="224308-BSU11210"/>
<dbReference type="EnsemblBacteria" id="CAB12962">
    <property type="protein sequence ID" value="CAB12962"/>
    <property type="gene ID" value="BSU_11210"/>
</dbReference>
<dbReference type="GeneID" id="936381"/>
<dbReference type="KEGG" id="bsu:BSU11210"/>
<dbReference type="PATRIC" id="fig|224308.179.peg.1206"/>
<dbReference type="eggNOG" id="COG0548">
    <property type="taxonomic scope" value="Bacteria"/>
</dbReference>
<dbReference type="InParanoid" id="P68729"/>
<dbReference type="OrthoDB" id="9803155at2"/>
<dbReference type="PhylomeDB" id="P68729"/>
<dbReference type="BioCyc" id="BSUB:BSU11210-MONOMER"/>
<dbReference type="UniPathway" id="UPA00068">
    <property type="reaction ID" value="UER00107"/>
</dbReference>
<dbReference type="Proteomes" id="UP000001570">
    <property type="component" value="Chromosome"/>
</dbReference>
<dbReference type="GO" id="GO:0005737">
    <property type="term" value="C:cytoplasm"/>
    <property type="evidence" value="ECO:0007669"/>
    <property type="project" value="UniProtKB-SubCell"/>
</dbReference>
<dbReference type="GO" id="GO:0003991">
    <property type="term" value="F:acetylglutamate kinase activity"/>
    <property type="evidence" value="ECO:0000318"/>
    <property type="project" value="GO_Central"/>
</dbReference>
<dbReference type="GO" id="GO:0005524">
    <property type="term" value="F:ATP binding"/>
    <property type="evidence" value="ECO:0007669"/>
    <property type="project" value="UniProtKB-UniRule"/>
</dbReference>
<dbReference type="GO" id="GO:0042450">
    <property type="term" value="P:arginine biosynthetic process via ornithine"/>
    <property type="evidence" value="ECO:0007669"/>
    <property type="project" value="UniProtKB-UniRule"/>
</dbReference>
<dbReference type="GO" id="GO:0006526">
    <property type="term" value="P:L-arginine biosynthetic process"/>
    <property type="evidence" value="ECO:0000318"/>
    <property type="project" value="GO_Central"/>
</dbReference>
<dbReference type="CDD" id="cd04238">
    <property type="entry name" value="AAK_NAGK-like"/>
    <property type="match status" value="1"/>
</dbReference>
<dbReference type="FunFam" id="3.40.1160.10:FF:000004">
    <property type="entry name" value="Acetylglutamate kinase"/>
    <property type="match status" value="1"/>
</dbReference>
<dbReference type="Gene3D" id="3.40.1160.10">
    <property type="entry name" value="Acetylglutamate kinase-like"/>
    <property type="match status" value="1"/>
</dbReference>
<dbReference type="HAMAP" id="MF_00082">
    <property type="entry name" value="ArgB"/>
    <property type="match status" value="1"/>
</dbReference>
<dbReference type="InterPro" id="IPR036393">
    <property type="entry name" value="AceGlu_kinase-like_sf"/>
</dbReference>
<dbReference type="InterPro" id="IPR004662">
    <property type="entry name" value="AcgluKinase_fam"/>
</dbReference>
<dbReference type="InterPro" id="IPR037528">
    <property type="entry name" value="ArgB"/>
</dbReference>
<dbReference type="InterPro" id="IPR001048">
    <property type="entry name" value="Asp/Glu/Uridylate_kinase"/>
</dbReference>
<dbReference type="InterPro" id="IPR001057">
    <property type="entry name" value="Glu/AcGlu_kinase"/>
</dbReference>
<dbReference type="NCBIfam" id="TIGR00761">
    <property type="entry name" value="argB"/>
    <property type="match status" value="1"/>
</dbReference>
<dbReference type="PANTHER" id="PTHR23342">
    <property type="entry name" value="N-ACETYLGLUTAMATE SYNTHASE"/>
    <property type="match status" value="1"/>
</dbReference>
<dbReference type="PANTHER" id="PTHR23342:SF0">
    <property type="entry name" value="N-ACETYLGLUTAMATE SYNTHASE, MITOCHONDRIAL"/>
    <property type="match status" value="1"/>
</dbReference>
<dbReference type="Pfam" id="PF00696">
    <property type="entry name" value="AA_kinase"/>
    <property type="match status" value="1"/>
</dbReference>
<dbReference type="PIRSF" id="PIRSF000728">
    <property type="entry name" value="NAGK"/>
    <property type="match status" value="1"/>
</dbReference>
<dbReference type="PRINTS" id="PR00474">
    <property type="entry name" value="GLU5KINASE"/>
</dbReference>
<dbReference type="SUPFAM" id="SSF53633">
    <property type="entry name" value="Carbamate kinase-like"/>
    <property type="match status" value="1"/>
</dbReference>
<accession>P68729</accession>
<accession>P36840</accession>
<organism>
    <name type="scientific">Bacillus subtilis (strain 168)</name>
    <dbReference type="NCBI Taxonomy" id="224308"/>
    <lineage>
        <taxon>Bacteria</taxon>
        <taxon>Bacillati</taxon>
        <taxon>Bacillota</taxon>
        <taxon>Bacilli</taxon>
        <taxon>Bacillales</taxon>
        <taxon>Bacillaceae</taxon>
        <taxon>Bacillus</taxon>
    </lineage>
</organism>
<sequence length="258" mass="27724">MKKTIVFKCGGSVIRELSEEFYQNLKELRASGWKLAIVHGGGPEITNMLKRLNIKTEFSGGQRKTTKPVLEVAEMVLSGSVNKFFVAELAKHGLRAAGISGKDGGLLEADYLDPETYGEVGEIKKVDASMVNALMENGIIPVIAPLSMTSDCKTLNVNADLAASAVAGALEADKLMFVTDVDGIMKEKQRLDVLTPKEIQMLIKQEVITGGMIPKVNSALSALSDQVSEVMIVNGKGSFFAEQTFQGTKIVKAKEAVS</sequence>
<feature type="chain" id="PRO_0000112587" description="Acetylglutamate kinase">
    <location>
        <begin position="1"/>
        <end position="258"/>
    </location>
</feature>
<feature type="binding site" evidence="1">
    <location>
        <begin position="41"/>
        <end position="42"/>
    </location>
    <ligand>
        <name>substrate</name>
    </ligand>
</feature>
<feature type="binding site" evidence="1">
    <location>
        <position position="63"/>
    </location>
    <ligand>
        <name>substrate</name>
    </ligand>
</feature>
<feature type="binding site" evidence="1">
    <location>
        <position position="156"/>
    </location>
    <ligand>
        <name>substrate</name>
    </ligand>
</feature>
<feature type="site" description="Transition state stabilizer" evidence="1">
    <location>
        <position position="8"/>
    </location>
</feature>
<feature type="site" description="Transition state stabilizer" evidence="1">
    <location>
        <position position="215"/>
    </location>
</feature>
<protein>
    <recommendedName>
        <fullName evidence="1">Acetylglutamate kinase</fullName>
        <ecNumber evidence="1">2.7.2.8</ecNumber>
    </recommendedName>
    <alternativeName>
        <fullName evidence="1">N-acetyl-L-glutamate 5-phosphotransferase</fullName>
    </alternativeName>
    <alternativeName>
        <fullName evidence="1">NAG kinase</fullName>
        <shortName evidence="1">NAGK</shortName>
    </alternativeName>
</protein>
<proteinExistence type="inferred from homology"/>